<name>IL1B_EUMJU</name>
<keyword id="KW-0202">Cytokine</keyword>
<keyword id="KW-0963">Cytoplasm</keyword>
<keyword id="KW-0395">Inflammatory response</keyword>
<keyword id="KW-0458">Lysosome</keyword>
<keyword id="KW-0497">Mitogen</keyword>
<keyword id="KW-0666">Pyrogen</keyword>
<keyword id="KW-0964">Secreted</keyword>
<sequence>MATVPEPTSEMMSYYYSDNENDLFFEADGPRKMKCCFQDLNNSSLEDEGIQLHISHQLHNKSLKHFVSVVVALEKLKKVSLPCSQPLQDDDLKNIFCCIFEEEPIVCEVYDDDAFVCDAPLQSLDCKFRDISQKSLVLYNSCELRALHLNGSSVNQQAVFRMSFVQGDENSNKIPVALCIKEKNLYLSCVMKDGKPTLQLEMLDPRVYPKKKMEKRFVFNKTEIKETLEFESSQFPNWYISTSKAEAMPVFLGNTKGGQDITDFTMELSS</sequence>
<organism>
    <name type="scientific">Eumetopias jubatus</name>
    <name type="common">Steller sea lion</name>
    <name type="synonym">Phoca jubata</name>
    <dbReference type="NCBI Taxonomy" id="34886"/>
    <lineage>
        <taxon>Eukaryota</taxon>
        <taxon>Metazoa</taxon>
        <taxon>Chordata</taxon>
        <taxon>Craniata</taxon>
        <taxon>Vertebrata</taxon>
        <taxon>Euteleostomi</taxon>
        <taxon>Mammalia</taxon>
        <taxon>Eutheria</taxon>
        <taxon>Laurasiatheria</taxon>
        <taxon>Carnivora</taxon>
        <taxon>Caniformia</taxon>
        <taxon>Pinnipedia</taxon>
        <taxon>Otariidae</taxon>
        <taxon>Eumetopias</taxon>
    </lineage>
</organism>
<protein>
    <recommendedName>
        <fullName>Interleukin-1 beta</fullName>
        <shortName>IL-1 beta</shortName>
    </recommendedName>
</protein>
<proteinExistence type="evidence at transcript level"/>
<accession>Q6R2X3</accession>
<comment type="function">
    <text evidence="2">Potent pro-inflammatory cytokine. Initially discovered as the major endogenous pyrogen, induces prostaglandin synthesis, neutrophil influx and activation, T-cell activation and cytokine production, B-cell activation and antibody production, and fibroblast proliferation and collagen production. Promotes Th17 differentiation of T-cells. Synergizes with IL12/interleukin-12 to induce IFNG synthesis from T-helper 1 (Th1) cells. Plays a role in angiogenesis by inducing VEGF production synergistically with TNF and IL6. Involved in transduction of inflammation downstream of pyroptosis: its mature form is specifically released in the extracellular milieu by passing through the gasdermin-D (GSDMD) pore.</text>
</comment>
<comment type="subunit">
    <text evidence="2">Monomer. In its precursor form, weakly interacts with full-length MEFV; the mature cytokine does not interact at all. Interacts with integrins ITGAV:ITGBV and ITGA5:ITGB1; integrin-binding is required for IL1B signaling. Interacts with cargo receptor TMED10; the interaction is direct and is required for the secretion of IL1B mature form. Interacts with HSP90AB1; the interaction facilitates cargo translocation into the ERGIC. Interacts with HSP90B1; the interaction facilitates cargo translocation into the ERGIC.</text>
</comment>
<comment type="subcellular location">
    <subcellularLocation>
        <location evidence="2">Cytoplasm</location>
        <location evidence="2">Cytosol</location>
    </subcellularLocation>
    <subcellularLocation>
        <location evidence="2">Secreted</location>
    </subcellularLocation>
    <subcellularLocation>
        <location evidence="2">Lysosome</location>
    </subcellularLocation>
    <subcellularLocation>
        <location evidence="3">Secreted</location>
        <location evidence="3">Extracellular exosome</location>
    </subcellularLocation>
    <text evidence="2">The precursor is cytosolic. In response to inflammasome-activating signals, such as ATP for NLRP3 inflammasome or bacterial flagellin for NLRC4 inflammasome, cleaved and secreted. Mature form is secreted and released in the extracellular milieu by passing through the gasdermin-D (GSDMD) pore. In contrast, the precursor form is not released, due to the presence of an acidic region that is proteolytically removed by CASP1 during maturation. The secretion is dependent on protein unfolding and facilitated by the cargo receptor TMED10.</text>
</comment>
<comment type="miscellaneous">
    <text evidence="1">IL1B production occurs in 2 steps, each being controlled by different stimuli. First, inflammatory signals, such as LPS, stimulate the synthesis and promote the accumulation of cytosolic stores of pro-IL1B (priming). Then additional signals are required for inflammasome assembly, leading to CASP1 activation, pro-IL1B processing and eventually secretion of the active cytokine. IL1B processing and secretion are temporarily associated.</text>
</comment>
<comment type="similarity">
    <text evidence="4">Belongs to the IL-1 family.</text>
</comment>
<gene>
    <name type="primary">IL1B</name>
</gene>
<dbReference type="EMBL" id="AY517546">
    <property type="protein sequence ID" value="AAR98779.1"/>
    <property type="molecule type" value="mRNA"/>
</dbReference>
<dbReference type="RefSeq" id="XP_027978154.1">
    <property type="nucleotide sequence ID" value="XM_028122353.1"/>
</dbReference>
<dbReference type="SMR" id="Q6R2X3"/>
<dbReference type="GeneID" id="114223431"/>
<dbReference type="GO" id="GO:0005829">
    <property type="term" value="C:cytosol"/>
    <property type="evidence" value="ECO:0007669"/>
    <property type="project" value="UniProtKB-SubCell"/>
</dbReference>
<dbReference type="GO" id="GO:0005615">
    <property type="term" value="C:extracellular space"/>
    <property type="evidence" value="ECO:0007669"/>
    <property type="project" value="UniProtKB-KW"/>
</dbReference>
<dbReference type="GO" id="GO:0005764">
    <property type="term" value="C:lysosome"/>
    <property type="evidence" value="ECO:0007669"/>
    <property type="project" value="UniProtKB-SubCell"/>
</dbReference>
<dbReference type="GO" id="GO:0005125">
    <property type="term" value="F:cytokine activity"/>
    <property type="evidence" value="ECO:0007669"/>
    <property type="project" value="UniProtKB-KW"/>
</dbReference>
<dbReference type="GO" id="GO:0005178">
    <property type="term" value="F:integrin binding"/>
    <property type="evidence" value="ECO:0000250"/>
    <property type="project" value="UniProtKB"/>
</dbReference>
<dbReference type="GO" id="GO:0005149">
    <property type="term" value="F:interleukin-1 receptor binding"/>
    <property type="evidence" value="ECO:0007669"/>
    <property type="project" value="InterPro"/>
</dbReference>
<dbReference type="GO" id="GO:0071222">
    <property type="term" value="P:cellular response to lipopolysaccharide"/>
    <property type="evidence" value="ECO:0007669"/>
    <property type="project" value="TreeGrafter"/>
</dbReference>
<dbReference type="GO" id="GO:0019221">
    <property type="term" value="P:cytokine-mediated signaling pathway"/>
    <property type="evidence" value="ECO:0007669"/>
    <property type="project" value="TreeGrafter"/>
</dbReference>
<dbReference type="GO" id="GO:0001660">
    <property type="term" value="P:fever generation"/>
    <property type="evidence" value="ECO:0007669"/>
    <property type="project" value="UniProtKB-KW"/>
</dbReference>
<dbReference type="GO" id="GO:0006955">
    <property type="term" value="P:immune response"/>
    <property type="evidence" value="ECO:0007669"/>
    <property type="project" value="InterPro"/>
</dbReference>
<dbReference type="GO" id="GO:0051781">
    <property type="term" value="P:positive regulation of cell division"/>
    <property type="evidence" value="ECO:0007669"/>
    <property type="project" value="UniProtKB-KW"/>
</dbReference>
<dbReference type="GO" id="GO:0033092">
    <property type="term" value="P:positive regulation of immature T cell proliferation in thymus"/>
    <property type="evidence" value="ECO:0007669"/>
    <property type="project" value="TreeGrafter"/>
</dbReference>
<dbReference type="GO" id="GO:2000556">
    <property type="term" value="P:positive regulation of T-helper 1 cell cytokine production"/>
    <property type="evidence" value="ECO:0000250"/>
    <property type="project" value="UniProtKB"/>
</dbReference>
<dbReference type="GO" id="GO:0032729">
    <property type="term" value="P:positive regulation of type II interferon production"/>
    <property type="evidence" value="ECO:0000250"/>
    <property type="project" value="UniProtKB"/>
</dbReference>
<dbReference type="GO" id="GO:0010573">
    <property type="term" value="P:vascular endothelial growth factor production"/>
    <property type="evidence" value="ECO:0000250"/>
    <property type="project" value="UniProtKB"/>
</dbReference>
<dbReference type="CDD" id="cd23296">
    <property type="entry name" value="beta-trefoil_IL1B"/>
    <property type="match status" value="1"/>
</dbReference>
<dbReference type="FunFam" id="2.80.10.50:FF:000027">
    <property type="entry name" value="Interleukin-1 beta"/>
    <property type="match status" value="1"/>
</dbReference>
<dbReference type="Gene3D" id="2.80.10.50">
    <property type="match status" value="1"/>
</dbReference>
<dbReference type="InterPro" id="IPR020877">
    <property type="entry name" value="IL-1_CS"/>
</dbReference>
<dbReference type="InterPro" id="IPR000975">
    <property type="entry name" value="IL-1_fam"/>
</dbReference>
<dbReference type="InterPro" id="IPR003502">
    <property type="entry name" value="IL-1_propep"/>
</dbReference>
<dbReference type="InterPro" id="IPR008996">
    <property type="entry name" value="IL1/FGF"/>
</dbReference>
<dbReference type="PANTHER" id="PTHR10078:SF30">
    <property type="entry name" value="INTERLEUKIN-1 BETA"/>
    <property type="match status" value="1"/>
</dbReference>
<dbReference type="PANTHER" id="PTHR10078">
    <property type="entry name" value="INTERLEUKIN-1 FAMILY MEMBER"/>
    <property type="match status" value="1"/>
</dbReference>
<dbReference type="Pfam" id="PF00340">
    <property type="entry name" value="IL1"/>
    <property type="match status" value="1"/>
</dbReference>
<dbReference type="Pfam" id="PF02394">
    <property type="entry name" value="IL1_propep"/>
    <property type="match status" value="1"/>
</dbReference>
<dbReference type="PRINTS" id="PR00262">
    <property type="entry name" value="IL1HBGF"/>
</dbReference>
<dbReference type="PRINTS" id="PR00264">
    <property type="entry name" value="INTERLEUKIN1"/>
</dbReference>
<dbReference type="PRINTS" id="PR01359">
    <property type="entry name" value="INTRLEUKIN1B"/>
</dbReference>
<dbReference type="PRINTS" id="PR01357">
    <property type="entry name" value="INTRLEUKN1AB"/>
</dbReference>
<dbReference type="SMART" id="SM00125">
    <property type="entry name" value="IL1"/>
    <property type="match status" value="1"/>
</dbReference>
<dbReference type="SUPFAM" id="SSF50353">
    <property type="entry name" value="Cytokine"/>
    <property type="match status" value="1"/>
</dbReference>
<dbReference type="PROSITE" id="PS00253">
    <property type="entry name" value="INTERLEUKIN_1"/>
    <property type="match status" value="1"/>
</dbReference>
<feature type="propeptide" id="PRO_0000015295" evidence="1">
    <location>
        <begin position="1"/>
        <end position="118"/>
    </location>
</feature>
<feature type="chain" id="PRO_0000015296" description="Interleukin-1 beta">
    <location>
        <begin position="119"/>
        <end position="270"/>
    </location>
</feature>
<feature type="site" description="Important for interaction with integrin" evidence="2">
    <location>
        <position position="173"/>
    </location>
</feature>
<feature type="site" description="Important for interaction with integrin" evidence="2">
    <location>
        <position position="181"/>
    </location>
</feature>
<feature type="site" description="Important for interaction with integrin" evidence="2">
    <location>
        <position position="183"/>
    </location>
</feature>
<feature type="site" description="Important for interaction with integrin" evidence="2">
    <location>
        <position position="192"/>
    </location>
</feature>
<reference key="1">
    <citation type="submission" date="2004-01" db="EMBL/GenBank/DDBJ databases">
        <title>Cloning and sequencing of interleukin-1 beta (IL-1b) from cDNA libraries of Alaskan pinniped species: Steller sea lion (Eumetopias jubatus) harbor seal (Phoca vitulina richardsi) and ringed seal (Phoca hispida).</title>
        <authorList>
            <person name="Bozza M."/>
            <person name="Atkinson S."/>
        </authorList>
    </citation>
    <scope>NUCLEOTIDE SEQUENCE [MRNA]</scope>
</reference>
<evidence type="ECO:0000250" key="1"/>
<evidence type="ECO:0000250" key="2">
    <source>
        <dbReference type="UniProtKB" id="P01584"/>
    </source>
</evidence>
<evidence type="ECO:0000250" key="3">
    <source>
        <dbReference type="UniProtKB" id="P10749"/>
    </source>
</evidence>
<evidence type="ECO:0000305" key="4"/>